<name>RNH2_ACIC1</name>
<proteinExistence type="inferred from homology"/>
<evidence type="ECO:0000255" key="1">
    <source>
        <dbReference type="HAMAP-Rule" id="MF_00052"/>
    </source>
</evidence>
<evidence type="ECO:0000255" key="2">
    <source>
        <dbReference type="PROSITE-ProRule" id="PRU01319"/>
    </source>
</evidence>
<evidence type="ECO:0000256" key="3">
    <source>
        <dbReference type="SAM" id="MobiDB-lite"/>
    </source>
</evidence>
<dbReference type="EC" id="3.1.26.4" evidence="1"/>
<dbReference type="EMBL" id="CP000481">
    <property type="protein sequence ID" value="ABK53326.1"/>
    <property type="molecule type" value="Genomic_DNA"/>
</dbReference>
<dbReference type="RefSeq" id="WP_011720389.1">
    <property type="nucleotide sequence ID" value="NC_008578.1"/>
</dbReference>
<dbReference type="SMR" id="A0LV66"/>
<dbReference type="FunCoup" id="A0LV66">
    <property type="interactions" value="191"/>
</dbReference>
<dbReference type="STRING" id="351607.Acel_1554"/>
<dbReference type="KEGG" id="ace:Acel_1554"/>
<dbReference type="eggNOG" id="COG0164">
    <property type="taxonomic scope" value="Bacteria"/>
</dbReference>
<dbReference type="HOGENOM" id="CLU_036532_1_0_11"/>
<dbReference type="InParanoid" id="A0LV66"/>
<dbReference type="OrthoDB" id="9803420at2"/>
<dbReference type="Proteomes" id="UP000008221">
    <property type="component" value="Chromosome"/>
</dbReference>
<dbReference type="GO" id="GO:0005737">
    <property type="term" value="C:cytoplasm"/>
    <property type="evidence" value="ECO:0007669"/>
    <property type="project" value="UniProtKB-SubCell"/>
</dbReference>
<dbReference type="GO" id="GO:0032299">
    <property type="term" value="C:ribonuclease H2 complex"/>
    <property type="evidence" value="ECO:0007669"/>
    <property type="project" value="TreeGrafter"/>
</dbReference>
<dbReference type="GO" id="GO:0030145">
    <property type="term" value="F:manganese ion binding"/>
    <property type="evidence" value="ECO:0007669"/>
    <property type="project" value="UniProtKB-UniRule"/>
</dbReference>
<dbReference type="GO" id="GO:0003723">
    <property type="term" value="F:RNA binding"/>
    <property type="evidence" value="ECO:0007669"/>
    <property type="project" value="InterPro"/>
</dbReference>
<dbReference type="GO" id="GO:0004523">
    <property type="term" value="F:RNA-DNA hybrid ribonuclease activity"/>
    <property type="evidence" value="ECO:0007669"/>
    <property type="project" value="UniProtKB-UniRule"/>
</dbReference>
<dbReference type="GO" id="GO:0043137">
    <property type="term" value="P:DNA replication, removal of RNA primer"/>
    <property type="evidence" value="ECO:0007669"/>
    <property type="project" value="TreeGrafter"/>
</dbReference>
<dbReference type="GO" id="GO:0006298">
    <property type="term" value="P:mismatch repair"/>
    <property type="evidence" value="ECO:0007669"/>
    <property type="project" value="TreeGrafter"/>
</dbReference>
<dbReference type="CDD" id="cd07182">
    <property type="entry name" value="RNase_HII_bacteria_HII_like"/>
    <property type="match status" value="1"/>
</dbReference>
<dbReference type="FunFam" id="3.30.420.10:FF:000113">
    <property type="entry name" value="Ribonuclease HII"/>
    <property type="match status" value="1"/>
</dbReference>
<dbReference type="Gene3D" id="3.30.420.10">
    <property type="entry name" value="Ribonuclease H-like superfamily/Ribonuclease H"/>
    <property type="match status" value="1"/>
</dbReference>
<dbReference type="HAMAP" id="MF_00052_B">
    <property type="entry name" value="RNase_HII_B"/>
    <property type="match status" value="1"/>
</dbReference>
<dbReference type="InterPro" id="IPR022898">
    <property type="entry name" value="RNase_HII"/>
</dbReference>
<dbReference type="InterPro" id="IPR001352">
    <property type="entry name" value="RNase_HII/HIII"/>
</dbReference>
<dbReference type="InterPro" id="IPR024567">
    <property type="entry name" value="RNase_HII/HIII_dom"/>
</dbReference>
<dbReference type="InterPro" id="IPR012337">
    <property type="entry name" value="RNaseH-like_sf"/>
</dbReference>
<dbReference type="InterPro" id="IPR036397">
    <property type="entry name" value="RNaseH_sf"/>
</dbReference>
<dbReference type="NCBIfam" id="NF000595">
    <property type="entry name" value="PRK00015.1-3"/>
    <property type="match status" value="1"/>
</dbReference>
<dbReference type="NCBIfam" id="NF000598">
    <property type="entry name" value="PRK00015.2-2"/>
    <property type="match status" value="1"/>
</dbReference>
<dbReference type="PANTHER" id="PTHR10954">
    <property type="entry name" value="RIBONUCLEASE H2 SUBUNIT A"/>
    <property type="match status" value="1"/>
</dbReference>
<dbReference type="PANTHER" id="PTHR10954:SF18">
    <property type="entry name" value="RIBONUCLEASE HII"/>
    <property type="match status" value="1"/>
</dbReference>
<dbReference type="Pfam" id="PF01351">
    <property type="entry name" value="RNase_HII"/>
    <property type="match status" value="1"/>
</dbReference>
<dbReference type="SUPFAM" id="SSF53098">
    <property type="entry name" value="Ribonuclease H-like"/>
    <property type="match status" value="1"/>
</dbReference>
<dbReference type="PROSITE" id="PS51975">
    <property type="entry name" value="RNASE_H_2"/>
    <property type="match status" value="1"/>
</dbReference>
<sequence>MGASTTARLGPARVRSERRSCAAERHRLVDLYRYERRLARLGLEPVAGVDEAGRGACAGPLVVAAVILGSDRRNRIAGLADSKQLTPAARESIYNEIISRALAWSVVVIPSSEVDELGVHAANITGMRRAVAGLAVRPAYVLTDGFSIAGLNAPGLAVCKGDEAVACIAAASVVAKVTRDRLMVELHEKFPMYEFATHKGYVTAGHRAALARHGPCPEHRRSFVTVRRAGGRMELRITELADSDDSPGFASGPAEAVPGPAGSAGAASAAARPAAAGPAGRLVDQNRAADLRDNGDVSRPAELLEIP</sequence>
<accession>A0LV66</accession>
<reference key="1">
    <citation type="journal article" date="2009" name="Genome Res.">
        <title>Complete genome of the cellulolytic thermophile Acidothermus cellulolyticus 11B provides insights into its ecophysiological and evolutionary adaptations.</title>
        <authorList>
            <person name="Barabote R.D."/>
            <person name="Xie G."/>
            <person name="Leu D.H."/>
            <person name="Normand P."/>
            <person name="Necsulea A."/>
            <person name="Daubin V."/>
            <person name="Medigue C."/>
            <person name="Adney W.S."/>
            <person name="Xu X.C."/>
            <person name="Lapidus A."/>
            <person name="Parales R.E."/>
            <person name="Detter C."/>
            <person name="Pujic P."/>
            <person name="Bruce D."/>
            <person name="Lavire C."/>
            <person name="Challacombe J.F."/>
            <person name="Brettin T.S."/>
            <person name="Berry A.M."/>
        </authorList>
    </citation>
    <scope>NUCLEOTIDE SEQUENCE [LARGE SCALE GENOMIC DNA]</scope>
    <source>
        <strain>ATCC 43068 / DSM 8971 / 11B</strain>
    </source>
</reference>
<feature type="chain" id="PRO_0000334852" description="Ribonuclease HII">
    <location>
        <begin position="1"/>
        <end position="307"/>
    </location>
</feature>
<feature type="domain" description="RNase H type-2" evidence="2">
    <location>
        <begin position="44"/>
        <end position="235"/>
    </location>
</feature>
<feature type="region of interest" description="Disordered" evidence="3">
    <location>
        <begin position="241"/>
        <end position="307"/>
    </location>
</feature>
<feature type="compositionally biased region" description="Low complexity" evidence="3">
    <location>
        <begin position="250"/>
        <end position="280"/>
    </location>
</feature>
<feature type="compositionally biased region" description="Basic and acidic residues" evidence="3">
    <location>
        <begin position="287"/>
        <end position="296"/>
    </location>
</feature>
<feature type="binding site" evidence="1">
    <location>
        <position position="50"/>
    </location>
    <ligand>
        <name>a divalent metal cation</name>
        <dbReference type="ChEBI" id="CHEBI:60240"/>
    </ligand>
</feature>
<feature type="binding site" evidence="1">
    <location>
        <position position="51"/>
    </location>
    <ligand>
        <name>a divalent metal cation</name>
        <dbReference type="ChEBI" id="CHEBI:60240"/>
    </ligand>
</feature>
<feature type="binding site" evidence="1">
    <location>
        <position position="144"/>
    </location>
    <ligand>
        <name>a divalent metal cation</name>
        <dbReference type="ChEBI" id="CHEBI:60240"/>
    </ligand>
</feature>
<protein>
    <recommendedName>
        <fullName evidence="1">Ribonuclease HII</fullName>
        <shortName evidence="1">RNase HII</shortName>
        <ecNumber evidence="1">3.1.26.4</ecNumber>
    </recommendedName>
</protein>
<keyword id="KW-0963">Cytoplasm</keyword>
<keyword id="KW-0255">Endonuclease</keyword>
<keyword id="KW-0378">Hydrolase</keyword>
<keyword id="KW-0464">Manganese</keyword>
<keyword id="KW-0479">Metal-binding</keyword>
<keyword id="KW-0540">Nuclease</keyword>
<keyword id="KW-1185">Reference proteome</keyword>
<comment type="function">
    <text evidence="1">Endonuclease that specifically degrades the RNA of RNA-DNA hybrids.</text>
</comment>
<comment type="catalytic activity">
    <reaction evidence="1">
        <text>Endonucleolytic cleavage to 5'-phosphomonoester.</text>
        <dbReference type="EC" id="3.1.26.4"/>
    </reaction>
</comment>
<comment type="cofactor">
    <cofactor evidence="1">
        <name>Mn(2+)</name>
        <dbReference type="ChEBI" id="CHEBI:29035"/>
    </cofactor>
    <cofactor evidence="1">
        <name>Mg(2+)</name>
        <dbReference type="ChEBI" id="CHEBI:18420"/>
    </cofactor>
    <text evidence="1">Manganese or magnesium. Binds 1 divalent metal ion per monomer in the absence of substrate. May bind a second metal ion after substrate binding.</text>
</comment>
<comment type="subcellular location">
    <subcellularLocation>
        <location evidence="1">Cytoplasm</location>
    </subcellularLocation>
</comment>
<comment type="similarity">
    <text evidence="1">Belongs to the RNase HII family.</text>
</comment>
<organism>
    <name type="scientific">Acidothermus cellulolyticus (strain ATCC 43068 / DSM 8971 / 11B)</name>
    <dbReference type="NCBI Taxonomy" id="351607"/>
    <lineage>
        <taxon>Bacteria</taxon>
        <taxon>Bacillati</taxon>
        <taxon>Actinomycetota</taxon>
        <taxon>Actinomycetes</taxon>
        <taxon>Acidothermales</taxon>
        <taxon>Acidothermaceae</taxon>
        <taxon>Acidothermus</taxon>
    </lineage>
</organism>
<gene>
    <name evidence="1" type="primary">rnhB</name>
    <name type="ordered locus">Acel_1554</name>
</gene>